<organism>
    <name type="scientific">Saccharomyces cerevisiae (strain ATCC 204508 / S288c)</name>
    <name type="common">Baker's yeast</name>
    <dbReference type="NCBI Taxonomy" id="559292"/>
    <lineage>
        <taxon>Eukaryota</taxon>
        <taxon>Fungi</taxon>
        <taxon>Dikarya</taxon>
        <taxon>Ascomycota</taxon>
        <taxon>Saccharomycotina</taxon>
        <taxon>Saccharomycetes</taxon>
        <taxon>Saccharomycetales</taxon>
        <taxon>Saccharomycetaceae</taxon>
        <taxon>Saccharomyces</taxon>
    </lineage>
</organism>
<protein>
    <recommendedName>
        <fullName>Uncharacterized protein YIL152W</fullName>
    </recommendedName>
</protein>
<feature type="chain" id="PRO_0000202956" description="Uncharacterized protein YIL152W">
    <location>
        <begin position="1"/>
        <end position="235"/>
    </location>
</feature>
<feature type="region of interest" description="Disordered" evidence="1">
    <location>
        <begin position="1"/>
        <end position="47"/>
    </location>
</feature>
<feature type="region of interest" description="Disordered" evidence="1">
    <location>
        <begin position="78"/>
        <end position="128"/>
    </location>
</feature>
<feature type="compositionally biased region" description="Polar residues" evidence="1">
    <location>
        <begin position="20"/>
        <end position="33"/>
    </location>
</feature>
<feature type="compositionally biased region" description="Low complexity" evidence="1">
    <location>
        <begin position="84"/>
        <end position="98"/>
    </location>
</feature>
<feature type="compositionally biased region" description="Polar residues" evidence="1">
    <location>
        <begin position="106"/>
        <end position="128"/>
    </location>
</feature>
<accession>P40455</accession>
<accession>D6VVD5</accession>
<proteinExistence type="predicted"/>
<gene>
    <name type="ordered locus">YIL152W</name>
</gene>
<name>YIP2_YEAST</name>
<evidence type="ECO:0000256" key="1">
    <source>
        <dbReference type="SAM" id="MobiDB-lite"/>
    </source>
</evidence>
<keyword id="KW-1185">Reference proteome</keyword>
<sequence>MSHKRRGLVIYQDQKQQQQHPPGQSLSSISWSPTRRPHHPLKQQSTNSFSEILSKSSVQPNVQHDGNHMPISLLVLKQEHHKQQQQQQQRQNIRSQNSTPPLRQLVQESQWTSSASNSSLKKQEKQPQTFYNTDSKLVSQLHSSVKDLDAIIQTHKPKFDTIIRDFSQATILSSNELLIKLPKDQTIILHSRAPKINAEWLQNKVNDPSASLVIDSRSFLTLCNNIKWYLHWKFI</sequence>
<reference key="1">
    <citation type="journal article" date="1997" name="Nature">
        <title>The nucleotide sequence of Saccharomyces cerevisiae chromosome IX.</title>
        <authorList>
            <person name="Churcher C.M."/>
            <person name="Bowman S."/>
            <person name="Badcock K."/>
            <person name="Bankier A.T."/>
            <person name="Brown D."/>
            <person name="Chillingworth T."/>
            <person name="Connor R."/>
            <person name="Devlin K."/>
            <person name="Gentles S."/>
            <person name="Hamlin N."/>
            <person name="Harris D.E."/>
            <person name="Horsnell T."/>
            <person name="Hunt S."/>
            <person name="Jagels K."/>
            <person name="Jones M."/>
            <person name="Lye G."/>
            <person name="Moule S."/>
            <person name="Odell C."/>
            <person name="Pearson D."/>
            <person name="Rajandream M.A."/>
            <person name="Rice P."/>
            <person name="Rowley N."/>
            <person name="Skelton J."/>
            <person name="Smith V."/>
            <person name="Walsh S.V."/>
            <person name="Whitehead S."/>
            <person name="Barrell B.G."/>
        </authorList>
    </citation>
    <scope>NUCLEOTIDE SEQUENCE [LARGE SCALE GENOMIC DNA]</scope>
    <source>
        <strain>ATCC 204508 / S288c</strain>
    </source>
</reference>
<reference key="2">
    <citation type="journal article" date="2014" name="G3 (Bethesda)">
        <title>The reference genome sequence of Saccharomyces cerevisiae: Then and now.</title>
        <authorList>
            <person name="Engel S.R."/>
            <person name="Dietrich F.S."/>
            <person name="Fisk D.G."/>
            <person name="Binkley G."/>
            <person name="Balakrishnan R."/>
            <person name="Costanzo M.C."/>
            <person name="Dwight S.S."/>
            <person name="Hitz B.C."/>
            <person name="Karra K."/>
            <person name="Nash R.S."/>
            <person name="Weng S."/>
            <person name="Wong E.D."/>
            <person name="Lloyd P."/>
            <person name="Skrzypek M.S."/>
            <person name="Miyasato S.R."/>
            <person name="Simison M."/>
            <person name="Cherry J.M."/>
        </authorList>
    </citation>
    <scope>GENOME REANNOTATION</scope>
    <source>
        <strain>ATCC 204508 / S288c</strain>
    </source>
</reference>
<dbReference type="EMBL" id="Z38059">
    <property type="protein sequence ID" value="CAA86126.1"/>
    <property type="molecule type" value="Genomic_DNA"/>
</dbReference>
<dbReference type="EMBL" id="BK006942">
    <property type="protein sequence ID" value="DAA08401.1"/>
    <property type="molecule type" value="Genomic_DNA"/>
</dbReference>
<dbReference type="PIR" id="S48382">
    <property type="entry name" value="S48382"/>
</dbReference>
<dbReference type="BioGRID" id="34840">
    <property type="interactions" value="82"/>
</dbReference>
<dbReference type="DIP" id="DIP-2047N"/>
<dbReference type="FunCoup" id="P40455">
    <property type="interactions" value="29"/>
</dbReference>
<dbReference type="IntAct" id="P40455">
    <property type="interactions" value="4"/>
</dbReference>
<dbReference type="MINT" id="P40455"/>
<dbReference type="STRING" id="4932.YIL152W"/>
<dbReference type="GlyGen" id="P40455">
    <property type="glycosylation" value="2 sites, 1 O-linked glycan (2 sites)"/>
</dbReference>
<dbReference type="iPTMnet" id="P40455"/>
<dbReference type="PaxDb" id="4932-YIL152W"/>
<dbReference type="PeptideAtlas" id="P40455"/>
<dbReference type="EnsemblFungi" id="YIL152W_mRNA">
    <property type="protein sequence ID" value="YIL152W"/>
    <property type="gene ID" value="YIL152W"/>
</dbReference>
<dbReference type="KEGG" id="sce:YIL152W"/>
<dbReference type="AGR" id="SGD:S000001414"/>
<dbReference type="SGD" id="S000001414">
    <property type="gene designation" value="YIL152W"/>
</dbReference>
<dbReference type="VEuPathDB" id="FungiDB:YIL152W"/>
<dbReference type="HOGENOM" id="CLU_107710_0_0_1"/>
<dbReference type="InParanoid" id="P40455"/>
<dbReference type="OMA" id="DXIIQTH"/>
<dbReference type="OrthoDB" id="4063703at2759"/>
<dbReference type="BioCyc" id="YEAST:G3O-31401-MONOMER"/>
<dbReference type="BioGRID-ORCS" id="854654">
    <property type="hits" value="5 hits in 10 CRISPR screens"/>
</dbReference>
<dbReference type="PRO" id="PR:P40455"/>
<dbReference type="Proteomes" id="UP000002311">
    <property type="component" value="Chromosome IX"/>
</dbReference>
<dbReference type="RNAct" id="P40455">
    <property type="molecule type" value="protein"/>
</dbReference>